<protein>
    <recommendedName>
        <fullName>Ethylene-responsive transcription factor ABR1</fullName>
    </recommendedName>
    <alternativeName>
        <fullName>Protein ABA REPRESSOR 1</fullName>
    </alternativeName>
</protein>
<feature type="chain" id="PRO_0000297915" description="Ethylene-responsive transcription factor ABR1">
    <location>
        <begin position="1"/>
        <end position="391"/>
    </location>
</feature>
<feature type="DNA-binding region" description="AP2/ERF" evidence="2">
    <location>
        <begin position="184"/>
        <end position="241"/>
    </location>
</feature>
<feature type="region of interest" description="Disordered" evidence="3">
    <location>
        <begin position="45"/>
        <end position="64"/>
    </location>
</feature>
<feature type="region of interest" description="Disordered" evidence="3">
    <location>
        <begin position="88"/>
        <end position="160"/>
    </location>
</feature>
<feature type="region of interest" description="Disordered" evidence="3">
    <location>
        <begin position="247"/>
        <end position="290"/>
    </location>
</feature>
<feature type="region of interest" description="Disordered" evidence="3">
    <location>
        <begin position="332"/>
        <end position="391"/>
    </location>
</feature>
<feature type="compositionally biased region" description="Low complexity" evidence="3">
    <location>
        <begin position="102"/>
        <end position="111"/>
    </location>
</feature>
<feature type="compositionally biased region" description="Polar residues" evidence="3">
    <location>
        <begin position="130"/>
        <end position="154"/>
    </location>
</feature>
<feature type="compositionally biased region" description="Polar residues" evidence="3">
    <location>
        <begin position="252"/>
        <end position="290"/>
    </location>
</feature>
<feature type="compositionally biased region" description="Low complexity" evidence="3">
    <location>
        <begin position="336"/>
        <end position="349"/>
    </location>
</feature>
<feature type="compositionally biased region" description="Polar residues" evidence="3">
    <location>
        <begin position="378"/>
        <end position="391"/>
    </location>
</feature>
<name>ABR1_ARATH</name>
<sequence>MCVLKVANQEDNVGKKAESIRDDDHRTLSEIDQWLYLFAAEDDHHRHSFPTQQPPPSSSSSSLISGFSREMEMSAIVSALTHVVAGNVPQHQQGGGEGSGEGTSNSSSSSGQKRRREVEEGGAKAVKAANTLTVDQYFSGGSSTSKVREASSNMSGPGPTYEYTTTATASSETSSFSGDQPRRRYRGVRQRPWGKWAAEIRDPFKAARVWLGTFDNAESAARAYDEAALRFRGNKAKLNFPENVKLVRPASTEAQPVHQTAAQRPTQSRNSGSTTTLLPIRPASNQSVHSQPLMQSYNLSYSEMARQQQQFQQHHQQSLDLYDQMSFPLRFGHTGGSMMQSTSSSSSHSRPLFSPAAVQPPPESASETGYLQDIQWPSDKTSNNYNNSPSS</sequence>
<gene>
    <name type="primary">ABR1</name>
    <name type="synonym">ERF111</name>
    <name type="ordered locus">At5g64750</name>
    <name type="ORF">MVP7.8</name>
</gene>
<proteinExistence type="evidence at transcript level"/>
<reference key="1">
    <citation type="submission" date="1999-04" db="EMBL/GenBank/DDBJ databases">
        <title>Structural analysis of Arabidopsis thaliana chromosome 5. XI.</title>
        <authorList>
            <person name="Kaneko T."/>
            <person name="Katoh T."/>
            <person name="Asamizu E."/>
            <person name="Sato S."/>
            <person name="Nakamura Y."/>
            <person name="Kotani H."/>
            <person name="Tabata S."/>
        </authorList>
    </citation>
    <scope>NUCLEOTIDE SEQUENCE [LARGE SCALE GENOMIC DNA]</scope>
    <source>
        <strain>cv. Columbia</strain>
    </source>
</reference>
<reference key="2">
    <citation type="journal article" date="2017" name="Plant J.">
        <title>Araport11: a complete reannotation of the Arabidopsis thaliana reference genome.</title>
        <authorList>
            <person name="Cheng C.Y."/>
            <person name="Krishnakumar V."/>
            <person name="Chan A.P."/>
            <person name="Thibaud-Nissen F."/>
            <person name="Schobel S."/>
            <person name="Town C.D."/>
        </authorList>
    </citation>
    <scope>GENOME REANNOTATION</scope>
    <source>
        <strain>cv. Columbia</strain>
    </source>
</reference>
<reference key="3">
    <citation type="journal article" date="2003" name="Science">
        <title>Empirical analysis of transcriptional activity in the Arabidopsis genome.</title>
        <authorList>
            <person name="Yamada K."/>
            <person name="Lim J."/>
            <person name="Dale J.M."/>
            <person name="Chen H."/>
            <person name="Shinn P."/>
            <person name="Palm C.J."/>
            <person name="Southwick A.M."/>
            <person name="Wu H.C."/>
            <person name="Kim C.J."/>
            <person name="Nguyen M."/>
            <person name="Pham P.K."/>
            <person name="Cheuk R.F."/>
            <person name="Karlin-Newmann G."/>
            <person name="Liu S.X."/>
            <person name="Lam B."/>
            <person name="Sakano H."/>
            <person name="Wu T."/>
            <person name="Yu G."/>
            <person name="Miranda M."/>
            <person name="Quach H.L."/>
            <person name="Tripp M."/>
            <person name="Chang C.H."/>
            <person name="Lee J.M."/>
            <person name="Toriumi M.J."/>
            <person name="Chan M.M."/>
            <person name="Tang C.C."/>
            <person name="Onodera C.S."/>
            <person name="Deng J.M."/>
            <person name="Akiyama K."/>
            <person name="Ansari Y."/>
            <person name="Arakawa T."/>
            <person name="Banh J."/>
            <person name="Banno F."/>
            <person name="Bowser L."/>
            <person name="Brooks S.Y."/>
            <person name="Carninci P."/>
            <person name="Chao Q."/>
            <person name="Choy N."/>
            <person name="Enju A."/>
            <person name="Goldsmith A.D."/>
            <person name="Gurjal M."/>
            <person name="Hansen N.F."/>
            <person name="Hayashizaki Y."/>
            <person name="Johnson-Hopson C."/>
            <person name="Hsuan V.W."/>
            <person name="Iida K."/>
            <person name="Karnes M."/>
            <person name="Khan S."/>
            <person name="Koesema E."/>
            <person name="Ishida J."/>
            <person name="Jiang P.X."/>
            <person name="Jones T."/>
            <person name="Kawai J."/>
            <person name="Kamiya A."/>
            <person name="Meyers C."/>
            <person name="Nakajima M."/>
            <person name="Narusaka M."/>
            <person name="Seki M."/>
            <person name="Sakurai T."/>
            <person name="Satou M."/>
            <person name="Tamse R."/>
            <person name="Vaysberg M."/>
            <person name="Wallender E.K."/>
            <person name="Wong C."/>
            <person name="Yamamura Y."/>
            <person name="Yuan S."/>
            <person name="Shinozaki K."/>
            <person name="Davis R.W."/>
            <person name="Theologis A."/>
            <person name="Ecker J.R."/>
        </authorList>
    </citation>
    <scope>NUCLEOTIDE SEQUENCE [LARGE SCALE MRNA]</scope>
    <source>
        <strain>cv. Columbia</strain>
    </source>
</reference>
<reference key="4">
    <citation type="journal article" date="2005" name="Plant Physiol.">
        <title>ABR1, an APETALA2-domain transcription factor that functions as a repressor of ABA response in Arabidopsis.</title>
        <authorList>
            <person name="Pandey G.K."/>
            <person name="Grant J.J."/>
            <person name="Cheong Y.H."/>
            <person name="Kim B.G."/>
            <person name="Li L."/>
            <person name="Luan S."/>
        </authorList>
    </citation>
    <scope>FUNCTION</scope>
    <scope>INDUCTION</scope>
    <scope>TISSUE SPECIFICITY</scope>
</reference>
<reference key="5">
    <citation type="journal article" date="2006" name="Plant Physiol.">
        <title>Genome-wide analysis of the ERF gene family in Arabidopsis and rice.</title>
        <authorList>
            <person name="Nakano T."/>
            <person name="Suzuki K."/>
            <person name="Fujimura T."/>
            <person name="Shinshi H."/>
        </authorList>
    </citation>
    <scope>GENE FAMILY</scope>
    <scope>NOMENCLATURE</scope>
</reference>
<reference key="6">
    <citation type="journal article" date="2016" name="Mol. Plant">
        <title>A dual-function transcription factor, AtYY1, is a novel negative regulator of the Arabidopsis ABA response network.</title>
        <authorList>
            <person name="Li T."/>
            <person name="Wu X.-Y."/>
            <person name="Li H."/>
            <person name="Song J.-H."/>
            <person name="Liu J.-Y."/>
        </authorList>
    </citation>
    <scope>INDUCTION BY ABSCISIC ACID; SALT AND YY1</scope>
    <source>
        <strain>cv. Columbia</strain>
    </source>
</reference>
<keyword id="KW-0938">Abscisic acid signaling pathway</keyword>
<keyword id="KW-0010">Activator</keyword>
<keyword id="KW-0238">DNA-binding</keyword>
<keyword id="KW-0936">Ethylene signaling pathway</keyword>
<keyword id="KW-0539">Nucleus</keyword>
<keyword id="KW-1185">Reference proteome</keyword>
<keyword id="KW-0346">Stress response</keyword>
<keyword id="KW-0804">Transcription</keyword>
<keyword id="KW-0805">Transcription regulation</keyword>
<organism>
    <name type="scientific">Arabidopsis thaliana</name>
    <name type="common">Mouse-ear cress</name>
    <dbReference type="NCBI Taxonomy" id="3702"/>
    <lineage>
        <taxon>Eukaryota</taxon>
        <taxon>Viridiplantae</taxon>
        <taxon>Streptophyta</taxon>
        <taxon>Embryophyta</taxon>
        <taxon>Tracheophyta</taxon>
        <taxon>Spermatophyta</taxon>
        <taxon>Magnoliopsida</taxon>
        <taxon>eudicotyledons</taxon>
        <taxon>Gunneridae</taxon>
        <taxon>Pentapetalae</taxon>
        <taxon>rosids</taxon>
        <taxon>malvids</taxon>
        <taxon>Brassicales</taxon>
        <taxon>Brassicaceae</taxon>
        <taxon>Camelineae</taxon>
        <taxon>Arabidopsis</taxon>
    </lineage>
</organism>
<evidence type="ECO:0000250" key="1"/>
<evidence type="ECO:0000255" key="2">
    <source>
        <dbReference type="PROSITE-ProRule" id="PRU00366"/>
    </source>
</evidence>
<evidence type="ECO:0000256" key="3">
    <source>
        <dbReference type="SAM" id="MobiDB-lite"/>
    </source>
</evidence>
<evidence type="ECO:0000269" key="4">
    <source>
    </source>
</evidence>
<evidence type="ECO:0000269" key="5">
    <source>
    </source>
</evidence>
<evidence type="ECO:0000305" key="6"/>
<accession>Q9FGF8</accession>
<dbReference type="EMBL" id="AB025637">
    <property type="protein sequence ID" value="BAB10308.1"/>
    <property type="molecule type" value="Genomic_DNA"/>
</dbReference>
<dbReference type="EMBL" id="CP002688">
    <property type="protein sequence ID" value="AED97946.1"/>
    <property type="molecule type" value="Genomic_DNA"/>
</dbReference>
<dbReference type="EMBL" id="AY140092">
    <property type="protein sequence ID" value="AAM98233.1"/>
    <property type="molecule type" value="mRNA"/>
</dbReference>
<dbReference type="EMBL" id="BT008480">
    <property type="protein sequence ID" value="AAP37839.1"/>
    <property type="molecule type" value="mRNA"/>
</dbReference>
<dbReference type="RefSeq" id="NP_201280.1">
    <property type="nucleotide sequence ID" value="NM_125871.5"/>
</dbReference>
<dbReference type="SMR" id="Q9FGF8"/>
<dbReference type="BioGRID" id="21838">
    <property type="interactions" value="28"/>
</dbReference>
<dbReference type="FunCoup" id="Q9FGF8">
    <property type="interactions" value="24"/>
</dbReference>
<dbReference type="IntAct" id="Q9FGF8">
    <property type="interactions" value="29"/>
</dbReference>
<dbReference type="STRING" id="3702.Q9FGF8"/>
<dbReference type="PaxDb" id="3702-AT5G64750.1"/>
<dbReference type="ProteomicsDB" id="244629"/>
<dbReference type="EnsemblPlants" id="AT5G64750.1">
    <property type="protein sequence ID" value="AT5G64750.1"/>
    <property type="gene ID" value="AT5G64750"/>
</dbReference>
<dbReference type="GeneID" id="836596"/>
<dbReference type="Gramene" id="AT5G64750.1">
    <property type="protein sequence ID" value="AT5G64750.1"/>
    <property type="gene ID" value="AT5G64750"/>
</dbReference>
<dbReference type="KEGG" id="ath:AT5G64750"/>
<dbReference type="Araport" id="AT5G64750"/>
<dbReference type="TAIR" id="AT5G64750">
    <property type="gene designation" value="ABR1"/>
</dbReference>
<dbReference type="eggNOG" id="ENOG502S34Q">
    <property type="taxonomic scope" value="Eukaryota"/>
</dbReference>
<dbReference type="HOGENOM" id="CLU_042594_2_5_1"/>
<dbReference type="InParanoid" id="Q9FGF8"/>
<dbReference type="OMA" id="EMGNAVY"/>
<dbReference type="OrthoDB" id="1925932at2759"/>
<dbReference type="PhylomeDB" id="Q9FGF8"/>
<dbReference type="PRO" id="PR:Q9FGF8"/>
<dbReference type="Proteomes" id="UP000006548">
    <property type="component" value="Chromosome 5"/>
</dbReference>
<dbReference type="ExpressionAtlas" id="Q9FGF8">
    <property type="expression patterns" value="baseline and differential"/>
</dbReference>
<dbReference type="GO" id="GO:0005634">
    <property type="term" value="C:nucleus"/>
    <property type="evidence" value="ECO:0007669"/>
    <property type="project" value="UniProtKB-SubCell"/>
</dbReference>
<dbReference type="GO" id="GO:0003677">
    <property type="term" value="F:DNA binding"/>
    <property type="evidence" value="ECO:0007669"/>
    <property type="project" value="UniProtKB-KW"/>
</dbReference>
<dbReference type="GO" id="GO:0003700">
    <property type="term" value="F:DNA-binding transcription factor activity"/>
    <property type="evidence" value="ECO:0000250"/>
    <property type="project" value="TAIR"/>
</dbReference>
<dbReference type="GO" id="GO:0009738">
    <property type="term" value="P:abscisic acid-activated signaling pathway"/>
    <property type="evidence" value="ECO:0007669"/>
    <property type="project" value="UniProtKB-KW"/>
</dbReference>
<dbReference type="GO" id="GO:0050832">
    <property type="term" value="P:defense response to fungus"/>
    <property type="evidence" value="ECO:0000270"/>
    <property type="project" value="TAIR"/>
</dbReference>
<dbReference type="GO" id="GO:0009873">
    <property type="term" value="P:ethylene-activated signaling pathway"/>
    <property type="evidence" value="ECO:0007669"/>
    <property type="project" value="UniProtKB-KW"/>
</dbReference>
<dbReference type="GO" id="GO:0009788">
    <property type="term" value="P:negative regulation of abscisic acid-activated signaling pathway"/>
    <property type="evidence" value="ECO:0000315"/>
    <property type="project" value="TAIR"/>
</dbReference>
<dbReference type="GO" id="GO:0009737">
    <property type="term" value="P:response to abscisic acid"/>
    <property type="evidence" value="ECO:0000270"/>
    <property type="project" value="UniProtKB"/>
</dbReference>
<dbReference type="GO" id="GO:0009749">
    <property type="term" value="P:response to glucose"/>
    <property type="evidence" value="ECO:0000270"/>
    <property type="project" value="TAIR"/>
</dbReference>
<dbReference type="GO" id="GO:0006970">
    <property type="term" value="P:response to osmotic stress"/>
    <property type="evidence" value="ECO:0000270"/>
    <property type="project" value="TAIR"/>
</dbReference>
<dbReference type="GO" id="GO:1902074">
    <property type="term" value="P:response to salt"/>
    <property type="evidence" value="ECO:0000270"/>
    <property type="project" value="UniProtKB"/>
</dbReference>
<dbReference type="GO" id="GO:0062211">
    <property type="term" value="P:root regeneration"/>
    <property type="evidence" value="ECO:0000315"/>
    <property type="project" value="TAIR"/>
</dbReference>
<dbReference type="CDD" id="cd00018">
    <property type="entry name" value="AP2"/>
    <property type="match status" value="1"/>
</dbReference>
<dbReference type="FunFam" id="3.30.730.10:FF:000001">
    <property type="entry name" value="Ethylene-responsive transcription factor 2"/>
    <property type="match status" value="1"/>
</dbReference>
<dbReference type="Gene3D" id="3.30.730.10">
    <property type="entry name" value="AP2/ERF domain"/>
    <property type="match status" value="1"/>
</dbReference>
<dbReference type="InterPro" id="IPR001471">
    <property type="entry name" value="AP2/ERF_dom"/>
</dbReference>
<dbReference type="InterPro" id="IPR036955">
    <property type="entry name" value="AP2/ERF_dom_sf"/>
</dbReference>
<dbReference type="InterPro" id="IPR016177">
    <property type="entry name" value="DNA-bd_dom_sf"/>
</dbReference>
<dbReference type="InterPro" id="IPR044808">
    <property type="entry name" value="ERF_plant"/>
</dbReference>
<dbReference type="PANTHER" id="PTHR31190">
    <property type="entry name" value="DNA-BINDING DOMAIN"/>
    <property type="match status" value="1"/>
</dbReference>
<dbReference type="PANTHER" id="PTHR31190:SF358">
    <property type="entry name" value="ETHYLENE-RESPONSIVE TRANSCRIPTION FACTOR ABR1"/>
    <property type="match status" value="1"/>
</dbReference>
<dbReference type="Pfam" id="PF00847">
    <property type="entry name" value="AP2"/>
    <property type="match status" value="1"/>
</dbReference>
<dbReference type="PRINTS" id="PR00367">
    <property type="entry name" value="ETHRSPELEMNT"/>
</dbReference>
<dbReference type="SMART" id="SM00380">
    <property type="entry name" value="AP2"/>
    <property type="match status" value="1"/>
</dbReference>
<dbReference type="SUPFAM" id="SSF54171">
    <property type="entry name" value="DNA-binding domain"/>
    <property type="match status" value="1"/>
</dbReference>
<dbReference type="PROSITE" id="PS51032">
    <property type="entry name" value="AP2_ERF"/>
    <property type="match status" value="1"/>
</dbReference>
<comment type="function">
    <text evidence="1 4">Negative regulator of the abscisic acid (ABA) signaling pathway involved in seed germination and in responses to stress conditions. Probably acts as a transcriptional activator. Binds to the GCC-box pathogenesis-related promoter element. May be involved in the regulation of gene expression by stress factors and by components of stress signal transduction pathways (By similarity).</text>
</comment>
<comment type="subcellular location">
    <subcellularLocation>
        <location evidence="6">Nucleus</location>
    </subcellularLocation>
</comment>
<comment type="tissue specificity">
    <text evidence="4">Ubiquitous with lower levels in seeds and siliques.</text>
</comment>
<comment type="induction">
    <text evidence="4 5">By abscisic acid (ABA) and stresses, including cold, drought and salt (PubMed:16227468, PubMed:26961720). Triggered by YY1 (PubMed:26961720).</text>
</comment>
<comment type="similarity">
    <text evidence="6">Belongs to the AP2/ERF transcription factor family. ERF subfamily.</text>
</comment>